<comment type="function">
    <text evidence="1">One of the primary rRNA binding proteins, it binds directly to 16S rRNA where it helps nucleate assembly of the platform of the 30S subunit by binding and bridging several RNA helices of the 16S rRNA.</text>
</comment>
<comment type="function">
    <text evidence="1">Forms an intersubunit bridge (bridge B4) with the 23S rRNA of the 50S subunit in the ribosome.</text>
</comment>
<comment type="subunit">
    <text evidence="1">Part of the 30S ribosomal subunit. Forms a bridge to the 50S subunit in the 70S ribosome, contacting the 23S rRNA.</text>
</comment>
<comment type="similarity">
    <text evidence="1">Belongs to the universal ribosomal protein uS15 family.</text>
</comment>
<feature type="chain" id="PRO_0000115474" description="Small ribosomal subunit protein uS15">
    <location>
        <begin position="1"/>
        <end position="88"/>
    </location>
</feature>
<protein>
    <recommendedName>
        <fullName evidence="1">Small ribosomal subunit protein uS15</fullName>
    </recommendedName>
    <alternativeName>
        <fullName evidence="2">30S ribosomal protein S15</fullName>
    </alternativeName>
</protein>
<reference key="1">
    <citation type="submission" date="1995-01" db="EMBL/GenBank/DDBJ databases">
        <authorList>
            <person name="Xiang H."/>
            <person name="McIntosh M.A."/>
        </authorList>
    </citation>
    <scope>NUCLEOTIDE SEQUENCE [GENOMIC DNA]</scope>
    <source>
        <strain>ATCC 27399 / NCTC 10143 / Ms42</strain>
    </source>
</reference>
<dbReference type="EMBL" id="U20528">
    <property type="protein sequence ID" value="AAA62168.1"/>
    <property type="molecule type" value="Genomic_DNA"/>
</dbReference>
<dbReference type="SMR" id="P48780"/>
<dbReference type="GO" id="GO:0022627">
    <property type="term" value="C:cytosolic small ribosomal subunit"/>
    <property type="evidence" value="ECO:0007669"/>
    <property type="project" value="TreeGrafter"/>
</dbReference>
<dbReference type="GO" id="GO:0019843">
    <property type="term" value="F:rRNA binding"/>
    <property type="evidence" value="ECO:0007669"/>
    <property type="project" value="UniProtKB-UniRule"/>
</dbReference>
<dbReference type="GO" id="GO:0003735">
    <property type="term" value="F:structural constituent of ribosome"/>
    <property type="evidence" value="ECO:0007669"/>
    <property type="project" value="InterPro"/>
</dbReference>
<dbReference type="GO" id="GO:0006412">
    <property type="term" value="P:translation"/>
    <property type="evidence" value="ECO:0007669"/>
    <property type="project" value="UniProtKB-UniRule"/>
</dbReference>
<dbReference type="CDD" id="cd00353">
    <property type="entry name" value="Ribosomal_S15p_S13e"/>
    <property type="match status" value="1"/>
</dbReference>
<dbReference type="Gene3D" id="6.10.250.3130">
    <property type="match status" value="1"/>
</dbReference>
<dbReference type="Gene3D" id="1.10.287.10">
    <property type="entry name" value="S15/NS1, RNA-binding"/>
    <property type="match status" value="1"/>
</dbReference>
<dbReference type="HAMAP" id="MF_01343_B">
    <property type="entry name" value="Ribosomal_uS15_B"/>
    <property type="match status" value="1"/>
</dbReference>
<dbReference type="InterPro" id="IPR000589">
    <property type="entry name" value="Ribosomal_uS15"/>
</dbReference>
<dbReference type="InterPro" id="IPR005290">
    <property type="entry name" value="Ribosomal_uS15_bac-type"/>
</dbReference>
<dbReference type="InterPro" id="IPR009068">
    <property type="entry name" value="uS15_NS1_RNA-bd_sf"/>
</dbReference>
<dbReference type="NCBIfam" id="TIGR00952">
    <property type="entry name" value="S15_bact"/>
    <property type="match status" value="1"/>
</dbReference>
<dbReference type="PANTHER" id="PTHR23321">
    <property type="entry name" value="RIBOSOMAL PROTEIN S15, BACTERIAL AND ORGANELLAR"/>
    <property type="match status" value="1"/>
</dbReference>
<dbReference type="PANTHER" id="PTHR23321:SF26">
    <property type="entry name" value="SMALL RIBOSOMAL SUBUNIT PROTEIN US15M"/>
    <property type="match status" value="1"/>
</dbReference>
<dbReference type="Pfam" id="PF00312">
    <property type="entry name" value="Ribosomal_S15"/>
    <property type="match status" value="1"/>
</dbReference>
<dbReference type="SMART" id="SM01387">
    <property type="entry name" value="Ribosomal_S15"/>
    <property type="match status" value="1"/>
</dbReference>
<dbReference type="SUPFAM" id="SSF47060">
    <property type="entry name" value="S15/NS1 RNA-binding domain"/>
    <property type="match status" value="1"/>
</dbReference>
<dbReference type="PROSITE" id="PS00362">
    <property type="entry name" value="RIBOSOMAL_S15"/>
    <property type="match status" value="1"/>
</dbReference>
<gene>
    <name evidence="1" type="primary">rpsO</name>
</gene>
<organism>
    <name type="scientific">Mesomycoplasma flocculare</name>
    <name type="common">Mycoplasma flocculare</name>
    <dbReference type="NCBI Taxonomy" id="2128"/>
    <lineage>
        <taxon>Bacteria</taxon>
        <taxon>Bacillati</taxon>
        <taxon>Mycoplasmatota</taxon>
        <taxon>Mycoplasmoidales</taxon>
        <taxon>Metamycoplasmataceae</taxon>
        <taxon>Mesomycoplasma</taxon>
    </lineage>
</organism>
<proteinExistence type="inferred from homology"/>
<keyword id="KW-0687">Ribonucleoprotein</keyword>
<keyword id="KW-0689">Ribosomal protein</keyword>
<keyword id="KW-0694">RNA-binding</keyword>
<keyword id="KW-0699">rRNA-binding</keyword>
<sequence length="88" mass="10290">MITKAKKAEIITRFGKSEKNTGDISVQIALLPEDIEKLKLHFEKNKKDKHSMRGFIAKVNKRKKLLNYLKEKNFASYKETIEALNIRK</sequence>
<evidence type="ECO:0000255" key="1">
    <source>
        <dbReference type="HAMAP-Rule" id="MF_01343"/>
    </source>
</evidence>
<evidence type="ECO:0000305" key="2"/>
<name>RS15_MESFC</name>
<accession>P48780</accession>